<sequence>MKPPQRGRGGGVRGGRGLARGGEGSAVRGSGRGGESGRGRGPGRVKSESDGGIKGGSKVLVTPHRHAGVFVAKSKADALVTKNLVPGEIIYNEKRIFVQNEDRSTVEYRVWNPHRSKLADAITTGVDNIWIKPGVKVLYLGASSGYTVSHVSDIVGPEGCVYAVEHSDICGKVLMNMAEKRTNVIPIIEDARHPAKYRMLVGMVDIIFSDVNHPEQANILSLNASYFLKSGGHFMISIKANSIDSTIAAETVYQMEVEKLQMEELRPTEILHLDSCEEKHACVFGGYRLPRK</sequence>
<evidence type="ECO:0000250" key="1"/>
<evidence type="ECO:0000256" key="2">
    <source>
        <dbReference type="SAM" id="MobiDB-lite"/>
    </source>
</evidence>
<evidence type="ECO:0000269" key="3">
    <source>
    </source>
</evidence>
<evidence type="ECO:0000305" key="4"/>
<reference key="1">
    <citation type="journal article" date="2000" name="DNA Res.">
        <title>Structural analysis of Arabidopsis thaliana chromosome 5. X. Sequence features of the regions of 3,076,755 bp covered by sixty P1 and TAC clones.</title>
        <authorList>
            <person name="Sato S."/>
            <person name="Nakamura Y."/>
            <person name="Kaneko T."/>
            <person name="Katoh T."/>
            <person name="Asamizu E."/>
            <person name="Kotani H."/>
            <person name="Tabata S."/>
        </authorList>
    </citation>
    <scope>NUCLEOTIDE SEQUENCE [LARGE SCALE GENOMIC DNA]</scope>
    <source>
        <strain>cv. Columbia</strain>
    </source>
</reference>
<reference key="2">
    <citation type="journal article" date="2017" name="Plant J.">
        <title>Araport11: a complete reannotation of the Arabidopsis thaliana reference genome.</title>
        <authorList>
            <person name="Cheng C.Y."/>
            <person name="Krishnakumar V."/>
            <person name="Chan A.P."/>
            <person name="Thibaud-Nissen F."/>
            <person name="Schobel S."/>
            <person name="Town C.D."/>
        </authorList>
    </citation>
    <scope>GENOME REANNOTATION</scope>
    <source>
        <strain>cv. Columbia</strain>
    </source>
</reference>
<reference key="3">
    <citation type="journal article" date="2000" name="J. Biol. Chem.">
        <title>Fibrillarin genes encode both a conserved nucleolar protein and a novel small nucleolar RNA involved in ribosomal RNA methylation in Arabidopsis thaliana.</title>
        <authorList>
            <person name="Barneche F."/>
            <person name="Steinmetz F."/>
            <person name="Echeverria M."/>
        </authorList>
    </citation>
    <scope>TISSUE SPECIFICITY</scope>
    <source>
        <strain>cv. Columbia</strain>
    </source>
</reference>
<gene>
    <name type="primary">FIB3</name>
    <name type="ordered locus">At5g52490</name>
    <name type="ORF">K24M7.24</name>
</gene>
<dbReference type="EC" id="2.1.1.-"/>
<dbReference type="EMBL" id="AB019226">
    <property type="protein sequence ID" value="BAB10546.1"/>
    <property type="molecule type" value="Genomic_DNA"/>
</dbReference>
<dbReference type="EMBL" id="CP002688">
    <property type="protein sequence ID" value="AED96221.1"/>
    <property type="molecule type" value="Genomic_DNA"/>
</dbReference>
<dbReference type="RefSeq" id="NP_568773.1">
    <property type="nucleotide sequence ID" value="NM_124628.1"/>
</dbReference>
<dbReference type="SMR" id="Q9FHB3"/>
<dbReference type="BioGRID" id="20570">
    <property type="interactions" value="78"/>
</dbReference>
<dbReference type="FunCoup" id="Q9FHB3">
    <property type="interactions" value="935"/>
</dbReference>
<dbReference type="STRING" id="3702.Q9FHB3"/>
<dbReference type="PaxDb" id="3702-AT5G52490.1"/>
<dbReference type="EnsemblPlants" id="AT5G52490.1">
    <property type="protein sequence ID" value="AT5G52490.1"/>
    <property type="gene ID" value="AT5G52490"/>
</dbReference>
<dbReference type="GeneID" id="835325"/>
<dbReference type="Gramene" id="AT5G52490.1">
    <property type="protein sequence ID" value="AT5G52490.1"/>
    <property type="gene ID" value="AT5G52490"/>
</dbReference>
<dbReference type="KEGG" id="ath:AT5G52490"/>
<dbReference type="Araport" id="AT5G52490"/>
<dbReference type="TAIR" id="AT5G52490"/>
<dbReference type="eggNOG" id="KOG1596">
    <property type="taxonomic scope" value="Eukaryota"/>
</dbReference>
<dbReference type="HOGENOM" id="CLU_059055_1_0_1"/>
<dbReference type="InParanoid" id="Q9FHB3"/>
<dbReference type="OMA" id="CEEKHAC"/>
<dbReference type="PhylomeDB" id="Q9FHB3"/>
<dbReference type="PRO" id="PR:Q9FHB3"/>
<dbReference type="Proteomes" id="UP000006548">
    <property type="component" value="Chromosome 5"/>
</dbReference>
<dbReference type="ExpressionAtlas" id="Q9FHB3">
    <property type="expression patterns" value="baseline and differential"/>
</dbReference>
<dbReference type="GO" id="GO:0005730">
    <property type="term" value="C:nucleolus"/>
    <property type="evidence" value="ECO:0007669"/>
    <property type="project" value="UniProtKB-SubCell"/>
</dbReference>
<dbReference type="GO" id="GO:1990904">
    <property type="term" value="C:ribonucleoprotein complex"/>
    <property type="evidence" value="ECO:0007669"/>
    <property type="project" value="UniProtKB-KW"/>
</dbReference>
<dbReference type="GO" id="GO:0008168">
    <property type="term" value="F:methyltransferase activity"/>
    <property type="evidence" value="ECO:0007669"/>
    <property type="project" value="UniProtKB-KW"/>
</dbReference>
<dbReference type="GO" id="GO:0003723">
    <property type="term" value="F:RNA binding"/>
    <property type="evidence" value="ECO:0007669"/>
    <property type="project" value="UniProtKB-KW"/>
</dbReference>
<dbReference type="GO" id="GO:0032259">
    <property type="term" value="P:methylation"/>
    <property type="evidence" value="ECO:0007669"/>
    <property type="project" value="UniProtKB-KW"/>
</dbReference>
<dbReference type="GO" id="GO:0006364">
    <property type="term" value="P:rRNA processing"/>
    <property type="evidence" value="ECO:0007669"/>
    <property type="project" value="UniProtKB-KW"/>
</dbReference>
<dbReference type="FunFam" id="3.30.200.20:FF:000056">
    <property type="entry name" value="Fibrillarin like 1"/>
    <property type="match status" value="1"/>
</dbReference>
<dbReference type="FunFam" id="3.40.50.150:FF:000867">
    <property type="entry name" value="Predicted protein"/>
    <property type="match status" value="1"/>
</dbReference>
<dbReference type="Gene3D" id="3.30.200.20">
    <property type="entry name" value="Phosphorylase Kinase, domain 1"/>
    <property type="match status" value="1"/>
</dbReference>
<dbReference type="Gene3D" id="3.40.50.150">
    <property type="entry name" value="Vaccinia Virus protein VP39"/>
    <property type="match status" value="1"/>
</dbReference>
<dbReference type="InterPro" id="IPR000692">
    <property type="entry name" value="Fibrillarin"/>
</dbReference>
<dbReference type="InterPro" id="IPR029063">
    <property type="entry name" value="SAM-dependent_MTases_sf"/>
</dbReference>
<dbReference type="NCBIfam" id="NF003276">
    <property type="entry name" value="PRK04266.1-2"/>
    <property type="match status" value="1"/>
</dbReference>
<dbReference type="PANTHER" id="PTHR10335:SF0">
    <property type="entry name" value="RRNA 2'-O-METHYLTRANSFERASE FIBRILLARIN 1-RELATED"/>
    <property type="match status" value="1"/>
</dbReference>
<dbReference type="PANTHER" id="PTHR10335">
    <property type="entry name" value="RRNA 2-O-METHYLTRANSFERASE FIBRILLARIN"/>
    <property type="match status" value="1"/>
</dbReference>
<dbReference type="Pfam" id="PF01269">
    <property type="entry name" value="Fibrillarin"/>
    <property type="match status" value="1"/>
</dbReference>
<dbReference type="PIRSF" id="PIRSF006540">
    <property type="entry name" value="Nop17p"/>
    <property type="match status" value="1"/>
</dbReference>
<dbReference type="PRINTS" id="PR00052">
    <property type="entry name" value="FIBRILLARIN"/>
</dbReference>
<dbReference type="SMART" id="SM01206">
    <property type="entry name" value="Fibrillarin"/>
    <property type="match status" value="1"/>
</dbReference>
<dbReference type="SUPFAM" id="SSF53335">
    <property type="entry name" value="S-adenosyl-L-methionine-dependent methyltransferases"/>
    <property type="match status" value="1"/>
</dbReference>
<keyword id="KW-0489">Methyltransferase</keyword>
<keyword id="KW-0539">Nucleus</keyword>
<keyword id="KW-1185">Reference proteome</keyword>
<keyword id="KW-0687">Ribonucleoprotein</keyword>
<keyword id="KW-0694">RNA-binding</keyword>
<keyword id="KW-0698">rRNA processing</keyword>
<keyword id="KW-0949">S-adenosyl-L-methionine</keyword>
<keyword id="KW-0808">Transferase</keyword>
<protein>
    <recommendedName>
        <fullName>Putative rRNA 2'-O-methyltransferase fibrillarin 3</fullName>
        <ecNumber>2.1.1.-</ecNumber>
    </recommendedName>
    <alternativeName>
        <fullName>Fibrillarin-like protein 3</fullName>
    </alternativeName>
    <alternativeName>
        <fullName>Histone-glutamine methyltransferase</fullName>
    </alternativeName>
</protein>
<accession>Q9FHB3</accession>
<feature type="chain" id="PRO_0000148520" description="Putative rRNA 2'-O-methyltransferase fibrillarin 3">
    <location>
        <begin position="1"/>
        <end position="292"/>
    </location>
</feature>
<feature type="region of interest" description="Disordered" evidence="2">
    <location>
        <begin position="1"/>
        <end position="58"/>
    </location>
</feature>
<feature type="compositionally biased region" description="Gly residues" evidence="2">
    <location>
        <begin position="7"/>
        <end position="42"/>
    </location>
</feature>
<feature type="binding site" evidence="1">
    <location>
        <begin position="146"/>
        <end position="147"/>
    </location>
    <ligand>
        <name>S-adenosyl-L-methionine</name>
        <dbReference type="ChEBI" id="CHEBI:59789"/>
    </ligand>
</feature>
<feature type="binding site" evidence="1">
    <location>
        <begin position="165"/>
        <end position="166"/>
    </location>
    <ligand>
        <name>S-adenosyl-L-methionine</name>
        <dbReference type="ChEBI" id="CHEBI:59789"/>
    </ligand>
</feature>
<feature type="binding site" evidence="1">
    <location>
        <begin position="190"/>
        <end position="191"/>
    </location>
    <ligand>
        <name>S-adenosyl-L-methionine</name>
        <dbReference type="ChEBI" id="CHEBI:59789"/>
    </ligand>
</feature>
<feature type="binding site" evidence="1">
    <location>
        <begin position="210"/>
        <end position="213"/>
    </location>
    <ligand>
        <name>S-adenosyl-L-methionine</name>
        <dbReference type="ChEBI" id="CHEBI:59789"/>
    </ligand>
</feature>
<comment type="function">
    <text evidence="1">S-adenosyl-L-methionine-dependent methyltransferase that has the ability to methylate both RNAs and proteins. Involved in pre-rRNA processing. Utilizes the methyl donor S-adenosyl-L-methionine to catalyze the site-specific 2'-hydroxyl methylation of ribose moieties in pre-ribosomal RNA. Site specificity is provided by a guide RNA that base pairs with the substrate. Methylation occurs at a characteristic distance from the sequence involved in base pairing with the guide RNA. Also acts as a protein methyltransferase by mediating methylation of 'Gln-105' of histone H2A (H2AQ105me), a modification that impairs binding of the FACT complex and is specifically present at 35S ribosomal DNA locus (By similarity).</text>
</comment>
<comment type="catalytic activity">
    <reaction>
        <text>L-glutaminyl-[histone H2A] + S-adenosyl-L-methionine = N(5)-methyl-L-glutaminyl-[histone H2A] + S-adenosyl-L-homocysteine + H(+)</text>
        <dbReference type="Rhea" id="RHEA:50904"/>
        <dbReference type="Rhea" id="RHEA-COMP:12837"/>
        <dbReference type="Rhea" id="RHEA-COMP:12839"/>
        <dbReference type="ChEBI" id="CHEBI:15378"/>
        <dbReference type="ChEBI" id="CHEBI:30011"/>
        <dbReference type="ChEBI" id="CHEBI:57856"/>
        <dbReference type="ChEBI" id="CHEBI:59789"/>
        <dbReference type="ChEBI" id="CHEBI:61891"/>
    </reaction>
</comment>
<comment type="subunit">
    <text evidence="1">Component of box C/D small nucleolar ribonucleoprotein (snoRNP) particles.</text>
</comment>
<comment type="subcellular location">
    <subcellularLocation>
        <location evidence="1">Nucleus</location>
        <location evidence="1">Nucleolus</location>
    </subcellularLocation>
    <text evidence="1">Fibrillar region of the nucleolus.</text>
</comment>
<comment type="tissue specificity">
    <text evidence="3">Not detectable by RT-PCR.</text>
</comment>
<comment type="similarity">
    <text evidence="4">Belongs to the methyltransferase superfamily. Fibrillarin family.</text>
</comment>
<proteinExistence type="evidence at transcript level"/>
<organism>
    <name type="scientific">Arabidopsis thaliana</name>
    <name type="common">Mouse-ear cress</name>
    <dbReference type="NCBI Taxonomy" id="3702"/>
    <lineage>
        <taxon>Eukaryota</taxon>
        <taxon>Viridiplantae</taxon>
        <taxon>Streptophyta</taxon>
        <taxon>Embryophyta</taxon>
        <taxon>Tracheophyta</taxon>
        <taxon>Spermatophyta</taxon>
        <taxon>Magnoliopsida</taxon>
        <taxon>eudicotyledons</taxon>
        <taxon>Gunneridae</taxon>
        <taxon>Pentapetalae</taxon>
        <taxon>rosids</taxon>
        <taxon>malvids</taxon>
        <taxon>Brassicales</taxon>
        <taxon>Brassicaceae</taxon>
        <taxon>Camelineae</taxon>
        <taxon>Arabidopsis</taxon>
    </lineage>
</organism>
<name>FBRL3_ARATH</name>